<comment type="similarity">
    <text evidence="1">Belongs to the universal ribosomal protein uL29 family.</text>
</comment>
<gene>
    <name evidence="1" type="primary">rpmC</name>
    <name type="ordered locus">llmg_2375</name>
</gene>
<feature type="chain" id="PRO_1000007507" description="Large ribosomal subunit protein uL29">
    <location>
        <begin position="1"/>
        <end position="69"/>
    </location>
</feature>
<organism>
    <name type="scientific">Lactococcus lactis subsp. cremoris (strain MG1363)</name>
    <dbReference type="NCBI Taxonomy" id="416870"/>
    <lineage>
        <taxon>Bacteria</taxon>
        <taxon>Bacillati</taxon>
        <taxon>Bacillota</taxon>
        <taxon>Bacilli</taxon>
        <taxon>Lactobacillales</taxon>
        <taxon>Streptococcaceae</taxon>
        <taxon>Lactococcus</taxon>
        <taxon>Lactococcus cremoris subsp. cremoris</taxon>
    </lineage>
</organism>
<evidence type="ECO:0000255" key="1">
    <source>
        <dbReference type="HAMAP-Rule" id="MF_00374"/>
    </source>
</evidence>
<evidence type="ECO:0000305" key="2"/>
<accession>A2RNP7</accession>
<protein>
    <recommendedName>
        <fullName evidence="1">Large ribosomal subunit protein uL29</fullName>
    </recommendedName>
    <alternativeName>
        <fullName evidence="2">50S ribosomal protein L29</fullName>
    </alternativeName>
</protein>
<keyword id="KW-0002">3D-structure</keyword>
<keyword id="KW-0687">Ribonucleoprotein</keyword>
<keyword id="KW-0689">Ribosomal protein</keyword>
<proteinExistence type="evidence at protein level"/>
<name>RL29_LACLM</name>
<dbReference type="EMBL" id="AM406671">
    <property type="protein sequence ID" value="CAL98938.1"/>
    <property type="molecule type" value="Genomic_DNA"/>
</dbReference>
<dbReference type="RefSeq" id="WP_003129957.1">
    <property type="nucleotide sequence ID" value="NZ_WJVF01000005.1"/>
</dbReference>
<dbReference type="PDB" id="5MYJ">
    <property type="method" value="EM"/>
    <property type="resolution" value="5.60 A"/>
    <property type="chains" value="B1=1-69"/>
</dbReference>
<dbReference type="PDBsum" id="5MYJ"/>
<dbReference type="EMDB" id="EMD-3581"/>
<dbReference type="SMR" id="A2RNP7"/>
<dbReference type="STRING" id="416870.llmg_2375"/>
<dbReference type="GeneID" id="89634438"/>
<dbReference type="KEGG" id="llm:llmg_2375"/>
<dbReference type="eggNOG" id="COG0255">
    <property type="taxonomic scope" value="Bacteria"/>
</dbReference>
<dbReference type="HOGENOM" id="CLU_158491_5_2_9"/>
<dbReference type="OrthoDB" id="9815192at2"/>
<dbReference type="PhylomeDB" id="A2RNP7"/>
<dbReference type="Proteomes" id="UP000000364">
    <property type="component" value="Chromosome"/>
</dbReference>
<dbReference type="GO" id="GO:0022625">
    <property type="term" value="C:cytosolic large ribosomal subunit"/>
    <property type="evidence" value="ECO:0007669"/>
    <property type="project" value="TreeGrafter"/>
</dbReference>
<dbReference type="GO" id="GO:0003735">
    <property type="term" value="F:structural constituent of ribosome"/>
    <property type="evidence" value="ECO:0007669"/>
    <property type="project" value="InterPro"/>
</dbReference>
<dbReference type="GO" id="GO:0006412">
    <property type="term" value="P:translation"/>
    <property type="evidence" value="ECO:0007669"/>
    <property type="project" value="UniProtKB-UniRule"/>
</dbReference>
<dbReference type="CDD" id="cd00427">
    <property type="entry name" value="Ribosomal_L29_HIP"/>
    <property type="match status" value="1"/>
</dbReference>
<dbReference type="FunFam" id="1.10.287.310:FF:000001">
    <property type="entry name" value="50S ribosomal protein L29"/>
    <property type="match status" value="1"/>
</dbReference>
<dbReference type="Gene3D" id="1.10.287.310">
    <property type="match status" value="1"/>
</dbReference>
<dbReference type="HAMAP" id="MF_00374">
    <property type="entry name" value="Ribosomal_uL29"/>
    <property type="match status" value="1"/>
</dbReference>
<dbReference type="InterPro" id="IPR050063">
    <property type="entry name" value="Ribosomal_protein_uL29"/>
</dbReference>
<dbReference type="InterPro" id="IPR001854">
    <property type="entry name" value="Ribosomal_uL29"/>
</dbReference>
<dbReference type="InterPro" id="IPR018254">
    <property type="entry name" value="Ribosomal_uL29_CS"/>
</dbReference>
<dbReference type="InterPro" id="IPR036049">
    <property type="entry name" value="Ribosomal_uL29_sf"/>
</dbReference>
<dbReference type="NCBIfam" id="TIGR00012">
    <property type="entry name" value="L29"/>
    <property type="match status" value="1"/>
</dbReference>
<dbReference type="PANTHER" id="PTHR10916">
    <property type="entry name" value="60S RIBOSOMAL PROTEIN L35/50S RIBOSOMAL PROTEIN L29"/>
    <property type="match status" value="1"/>
</dbReference>
<dbReference type="PANTHER" id="PTHR10916:SF0">
    <property type="entry name" value="LARGE RIBOSOMAL SUBUNIT PROTEIN UL29C"/>
    <property type="match status" value="1"/>
</dbReference>
<dbReference type="Pfam" id="PF00831">
    <property type="entry name" value="Ribosomal_L29"/>
    <property type="match status" value="1"/>
</dbReference>
<dbReference type="SUPFAM" id="SSF46561">
    <property type="entry name" value="Ribosomal protein L29 (L29p)"/>
    <property type="match status" value="1"/>
</dbReference>
<dbReference type="PROSITE" id="PS00579">
    <property type="entry name" value="RIBOSOMAL_L29"/>
    <property type="match status" value="1"/>
</dbReference>
<sequence length="69" mass="7859">MKLSETKSLLKDLRALSVEELTTREAELKKELFDLRFQAAAGRLENTAKLDEVKKTIARVKTVQAELNK</sequence>
<reference key="1">
    <citation type="journal article" date="2007" name="J. Bacteriol.">
        <title>The complete genome sequence of the lactic acid bacterial paradigm Lactococcus lactis subsp. cremoris MG1363.</title>
        <authorList>
            <person name="Wegmann U."/>
            <person name="O'Connell-Motherway M."/>
            <person name="Zomer A."/>
            <person name="Buist G."/>
            <person name="Shearman C."/>
            <person name="Canchaya C."/>
            <person name="Ventura M."/>
            <person name="Goesmann A."/>
            <person name="Gasson M.J."/>
            <person name="Kuipers O.P."/>
            <person name="van Sinderen D."/>
            <person name="Kok J."/>
        </authorList>
    </citation>
    <scope>NUCLEOTIDE SEQUENCE [LARGE SCALE GENOMIC DNA]</scope>
    <source>
        <strain>MG1363</strain>
    </source>
</reference>